<organism>
    <name type="scientific">Geobacter sp. (strain M21)</name>
    <dbReference type="NCBI Taxonomy" id="443144"/>
    <lineage>
        <taxon>Bacteria</taxon>
        <taxon>Pseudomonadati</taxon>
        <taxon>Thermodesulfobacteriota</taxon>
        <taxon>Desulfuromonadia</taxon>
        <taxon>Geobacterales</taxon>
        <taxon>Geobacteraceae</taxon>
        <taxon>Geobacter</taxon>
    </lineage>
</organism>
<sequence>MGVDQPLGENIITTSLDSLVNWARKSSIWPMTFGLACCAIEMMATGAAKHDLDRFGIIFRASPRQADCIIIAGTVTKKMLPVIKTVYEQMPEPKWVVAMGACACSGGVFDTYSVVQGIDEALPVDVYIPGCPPRPEALLYGLMKLQDKIANERNSFGSSIGLGERLEPAA</sequence>
<feature type="chain" id="PRO_1000214860" description="NADH-quinone oxidoreductase subunit B">
    <location>
        <begin position="1"/>
        <end position="170"/>
    </location>
</feature>
<feature type="binding site" evidence="1">
    <location>
        <position position="37"/>
    </location>
    <ligand>
        <name>[4Fe-4S] cluster</name>
        <dbReference type="ChEBI" id="CHEBI:49883"/>
    </ligand>
</feature>
<feature type="binding site" evidence="1">
    <location>
        <position position="38"/>
    </location>
    <ligand>
        <name>[4Fe-4S] cluster</name>
        <dbReference type="ChEBI" id="CHEBI:49883"/>
    </ligand>
</feature>
<feature type="binding site" evidence="1">
    <location>
        <position position="102"/>
    </location>
    <ligand>
        <name>[4Fe-4S] cluster</name>
        <dbReference type="ChEBI" id="CHEBI:49883"/>
    </ligand>
</feature>
<feature type="binding site" evidence="1">
    <location>
        <position position="131"/>
    </location>
    <ligand>
        <name>[4Fe-4S] cluster</name>
        <dbReference type="ChEBI" id="CHEBI:49883"/>
    </ligand>
</feature>
<keyword id="KW-0004">4Fe-4S</keyword>
<keyword id="KW-0997">Cell inner membrane</keyword>
<keyword id="KW-1003">Cell membrane</keyword>
<keyword id="KW-0408">Iron</keyword>
<keyword id="KW-0411">Iron-sulfur</keyword>
<keyword id="KW-0472">Membrane</keyword>
<keyword id="KW-0479">Metal-binding</keyword>
<keyword id="KW-0520">NAD</keyword>
<keyword id="KW-0874">Quinone</keyword>
<keyword id="KW-1278">Translocase</keyword>
<keyword id="KW-0813">Transport</keyword>
<keyword id="KW-0830">Ubiquinone</keyword>
<dbReference type="EC" id="7.1.1.-" evidence="1"/>
<dbReference type="EMBL" id="CP001661">
    <property type="protein sequence ID" value="ACT20025.1"/>
    <property type="molecule type" value="Genomic_DNA"/>
</dbReference>
<dbReference type="SMR" id="C6E8N4"/>
<dbReference type="STRING" id="443144.GM21_4009"/>
<dbReference type="KEGG" id="gem:GM21_4009"/>
<dbReference type="eggNOG" id="COG0377">
    <property type="taxonomic scope" value="Bacteria"/>
</dbReference>
<dbReference type="HOGENOM" id="CLU_055737_7_3_7"/>
<dbReference type="OrthoDB" id="9786737at2"/>
<dbReference type="GO" id="GO:0005886">
    <property type="term" value="C:plasma membrane"/>
    <property type="evidence" value="ECO:0007669"/>
    <property type="project" value="UniProtKB-SubCell"/>
</dbReference>
<dbReference type="GO" id="GO:0045271">
    <property type="term" value="C:respiratory chain complex I"/>
    <property type="evidence" value="ECO:0007669"/>
    <property type="project" value="TreeGrafter"/>
</dbReference>
<dbReference type="GO" id="GO:0051539">
    <property type="term" value="F:4 iron, 4 sulfur cluster binding"/>
    <property type="evidence" value="ECO:0007669"/>
    <property type="project" value="UniProtKB-KW"/>
</dbReference>
<dbReference type="GO" id="GO:0005506">
    <property type="term" value="F:iron ion binding"/>
    <property type="evidence" value="ECO:0007669"/>
    <property type="project" value="UniProtKB-UniRule"/>
</dbReference>
<dbReference type="GO" id="GO:0008137">
    <property type="term" value="F:NADH dehydrogenase (ubiquinone) activity"/>
    <property type="evidence" value="ECO:0007669"/>
    <property type="project" value="InterPro"/>
</dbReference>
<dbReference type="GO" id="GO:0050136">
    <property type="term" value="F:NADH:ubiquinone reductase (non-electrogenic) activity"/>
    <property type="evidence" value="ECO:0007669"/>
    <property type="project" value="UniProtKB-UniRule"/>
</dbReference>
<dbReference type="GO" id="GO:0048038">
    <property type="term" value="F:quinone binding"/>
    <property type="evidence" value="ECO:0007669"/>
    <property type="project" value="UniProtKB-KW"/>
</dbReference>
<dbReference type="GO" id="GO:0009060">
    <property type="term" value="P:aerobic respiration"/>
    <property type="evidence" value="ECO:0007669"/>
    <property type="project" value="TreeGrafter"/>
</dbReference>
<dbReference type="GO" id="GO:0015990">
    <property type="term" value="P:electron transport coupled proton transport"/>
    <property type="evidence" value="ECO:0007669"/>
    <property type="project" value="TreeGrafter"/>
</dbReference>
<dbReference type="FunFam" id="3.40.50.12280:FF:000002">
    <property type="entry name" value="NADH-quinone oxidoreductase subunit B"/>
    <property type="match status" value="1"/>
</dbReference>
<dbReference type="Gene3D" id="3.40.50.12280">
    <property type="match status" value="1"/>
</dbReference>
<dbReference type="HAMAP" id="MF_01356">
    <property type="entry name" value="NDH1_NuoB"/>
    <property type="match status" value="1"/>
</dbReference>
<dbReference type="InterPro" id="IPR006137">
    <property type="entry name" value="NADH_UbQ_OxRdtase-like_20kDa"/>
</dbReference>
<dbReference type="InterPro" id="IPR006138">
    <property type="entry name" value="NADH_UQ_OxRdtase_20Kd_su"/>
</dbReference>
<dbReference type="NCBIfam" id="TIGR01957">
    <property type="entry name" value="nuoB_fam"/>
    <property type="match status" value="1"/>
</dbReference>
<dbReference type="NCBIfam" id="NF005012">
    <property type="entry name" value="PRK06411.1"/>
    <property type="match status" value="1"/>
</dbReference>
<dbReference type="PANTHER" id="PTHR11995">
    <property type="entry name" value="NADH DEHYDROGENASE"/>
    <property type="match status" value="1"/>
</dbReference>
<dbReference type="PANTHER" id="PTHR11995:SF14">
    <property type="entry name" value="NADH DEHYDROGENASE [UBIQUINONE] IRON-SULFUR PROTEIN 7, MITOCHONDRIAL"/>
    <property type="match status" value="1"/>
</dbReference>
<dbReference type="Pfam" id="PF01058">
    <property type="entry name" value="Oxidored_q6"/>
    <property type="match status" value="1"/>
</dbReference>
<dbReference type="SUPFAM" id="SSF56770">
    <property type="entry name" value="HydA/Nqo6-like"/>
    <property type="match status" value="1"/>
</dbReference>
<protein>
    <recommendedName>
        <fullName evidence="1">NADH-quinone oxidoreductase subunit B</fullName>
        <ecNumber evidence="1">7.1.1.-</ecNumber>
    </recommendedName>
    <alternativeName>
        <fullName evidence="1">NADH dehydrogenase I subunit B</fullName>
    </alternativeName>
    <alternativeName>
        <fullName evidence="1">NDH-1 subunit B</fullName>
    </alternativeName>
</protein>
<evidence type="ECO:0000255" key="1">
    <source>
        <dbReference type="HAMAP-Rule" id="MF_01356"/>
    </source>
</evidence>
<reference key="1">
    <citation type="submission" date="2009-07" db="EMBL/GenBank/DDBJ databases">
        <title>Complete sequence of Geobacter sp. M21.</title>
        <authorList>
            <consortium name="US DOE Joint Genome Institute"/>
            <person name="Lucas S."/>
            <person name="Copeland A."/>
            <person name="Lapidus A."/>
            <person name="Glavina del Rio T."/>
            <person name="Dalin E."/>
            <person name="Tice H."/>
            <person name="Bruce D."/>
            <person name="Goodwin L."/>
            <person name="Pitluck S."/>
            <person name="Saunders E."/>
            <person name="Brettin T."/>
            <person name="Detter J.C."/>
            <person name="Han C."/>
            <person name="Larimer F."/>
            <person name="Land M."/>
            <person name="Hauser L."/>
            <person name="Kyrpides N."/>
            <person name="Ovchinnikova G."/>
            <person name="Lovley D."/>
        </authorList>
    </citation>
    <scope>NUCLEOTIDE SEQUENCE [LARGE SCALE GENOMIC DNA]</scope>
    <source>
        <strain>M21</strain>
    </source>
</reference>
<gene>
    <name evidence="1" type="primary">nuoB</name>
    <name type="ordered locus">GM21_4009</name>
</gene>
<proteinExistence type="inferred from homology"/>
<comment type="function">
    <text evidence="1">NDH-1 shuttles electrons from NADH, via FMN and iron-sulfur (Fe-S) centers, to quinones in the respiratory chain. The immediate electron acceptor for the enzyme in this species is believed to be ubiquinone. Couples the redox reaction to proton translocation (for every two electrons transferred, four hydrogen ions are translocated across the cytoplasmic membrane), and thus conserves the redox energy in a proton gradient.</text>
</comment>
<comment type="catalytic activity">
    <reaction evidence="1">
        <text>a quinone + NADH + 5 H(+)(in) = a quinol + NAD(+) + 4 H(+)(out)</text>
        <dbReference type="Rhea" id="RHEA:57888"/>
        <dbReference type="ChEBI" id="CHEBI:15378"/>
        <dbReference type="ChEBI" id="CHEBI:24646"/>
        <dbReference type="ChEBI" id="CHEBI:57540"/>
        <dbReference type="ChEBI" id="CHEBI:57945"/>
        <dbReference type="ChEBI" id="CHEBI:132124"/>
    </reaction>
</comment>
<comment type="cofactor">
    <cofactor evidence="1">
        <name>[4Fe-4S] cluster</name>
        <dbReference type="ChEBI" id="CHEBI:49883"/>
    </cofactor>
    <text evidence="1">Binds 1 [4Fe-4S] cluster.</text>
</comment>
<comment type="subunit">
    <text evidence="1">NDH-1 is composed of 14 different subunits. Subunits NuoB, C, D, E, F, and G constitute the peripheral sector of the complex.</text>
</comment>
<comment type="subcellular location">
    <subcellularLocation>
        <location evidence="1">Cell inner membrane</location>
        <topology evidence="1">Peripheral membrane protein</topology>
        <orientation evidence="1">Cytoplasmic side</orientation>
    </subcellularLocation>
</comment>
<comment type="similarity">
    <text evidence="1">Belongs to the complex I 20 kDa subunit family.</text>
</comment>
<accession>C6E8N4</accession>
<name>NUOB_GEOSM</name>